<keyword id="KW-0963">Cytoplasm</keyword>
<keyword id="KW-1185">Reference proteome</keyword>
<keyword id="KW-0808">Transferase</keyword>
<feature type="chain" id="PRO_0000200571" description="Thiosulfate sulfurtransferase GlpE">
    <location>
        <begin position="1"/>
        <end position="109"/>
    </location>
</feature>
<feature type="domain" description="Rhodanese" evidence="1">
    <location>
        <begin position="17"/>
        <end position="105"/>
    </location>
</feature>
<feature type="active site" description="Cysteine persulfide intermediate" evidence="1">
    <location>
        <position position="65"/>
    </location>
</feature>
<feature type="sequence conflict" description="In Ref. 2 and 3." evidence="2" ref="2 3">
    <original>T</original>
    <variation>I</variation>
    <location>
        <position position="7"/>
    </location>
</feature>
<sequence length="109" mass="12304">MEQFEATSVEQAYLRWKEGKTALVDIRDPQSYEAGHAPGAFHLTNSSLHTFMQQTDFDQPVMVMCYHGNSSKGAAQYLLQQGFDVVYSIDGGFEAWARSYPQDITSESR</sequence>
<reference key="1">
    <citation type="journal article" date="2001" name="Nature">
        <title>Genome sequence of Yersinia pestis, the causative agent of plague.</title>
        <authorList>
            <person name="Parkhill J."/>
            <person name="Wren B.W."/>
            <person name="Thomson N.R."/>
            <person name="Titball R.W."/>
            <person name="Holden M.T.G."/>
            <person name="Prentice M.B."/>
            <person name="Sebaihia M."/>
            <person name="James K.D."/>
            <person name="Churcher C.M."/>
            <person name="Mungall K.L."/>
            <person name="Baker S."/>
            <person name="Basham D."/>
            <person name="Bentley S.D."/>
            <person name="Brooks K."/>
            <person name="Cerdeno-Tarraga A.-M."/>
            <person name="Chillingworth T."/>
            <person name="Cronin A."/>
            <person name="Davies R.M."/>
            <person name="Davis P."/>
            <person name="Dougan G."/>
            <person name="Feltwell T."/>
            <person name="Hamlin N."/>
            <person name="Holroyd S."/>
            <person name="Jagels K."/>
            <person name="Karlyshev A.V."/>
            <person name="Leather S."/>
            <person name="Moule S."/>
            <person name="Oyston P.C.F."/>
            <person name="Quail M.A."/>
            <person name="Rutherford K.M."/>
            <person name="Simmonds M."/>
            <person name="Skelton J."/>
            <person name="Stevens K."/>
            <person name="Whitehead S."/>
            <person name="Barrell B.G."/>
        </authorList>
    </citation>
    <scope>NUCLEOTIDE SEQUENCE [LARGE SCALE GENOMIC DNA]</scope>
    <source>
        <strain>CO-92 / Biovar Orientalis</strain>
    </source>
</reference>
<reference key="2">
    <citation type="journal article" date="2002" name="J. Bacteriol.">
        <title>Genome sequence of Yersinia pestis KIM.</title>
        <authorList>
            <person name="Deng W."/>
            <person name="Burland V."/>
            <person name="Plunkett G. III"/>
            <person name="Boutin A."/>
            <person name="Mayhew G.F."/>
            <person name="Liss P."/>
            <person name="Perna N.T."/>
            <person name="Rose D.J."/>
            <person name="Mau B."/>
            <person name="Zhou S."/>
            <person name="Schwartz D.C."/>
            <person name="Fetherston J.D."/>
            <person name="Lindler L.E."/>
            <person name="Brubaker R.R."/>
            <person name="Plano G.V."/>
            <person name="Straley S.C."/>
            <person name="McDonough K.A."/>
            <person name="Nilles M.L."/>
            <person name="Matson J.S."/>
            <person name="Blattner F.R."/>
            <person name="Perry R.D."/>
        </authorList>
    </citation>
    <scope>NUCLEOTIDE SEQUENCE [LARGE SCALE GENOMIC DNA]</scope>
    <source>
        <strain>KIM10+ / Biovar Mediaevalis</strain>
    </source>
</reference>
<reference key="3">
    <citation type="journal article" date="2004" name="DNA Res.">
        <title>Complete genome sequence of Yersinia pestis strain 91001, an isolate avirulent to humans.</title>
        <authorList>
            <person name="Song Y."/>
            <person name="Tong Z."/>
            <person name="Wang J."/>
            <person name="Wang L."/>
            <person name="Guo Z."/>
            <person name="Han Y."/>
            <person name="Zhang J."/>
            <person name="Pei D."/>
            <person name="Zhou D."/>
            <person name="Qin H."/>
            <person name="Pang X."/>
            <person name="Han Y."/>
            <person name="Zhai J."/>
            <person name="Li M."/>
            <person name="Cui B."/>
            <person name="Qi Z."/>
            <person name="Jin L."/>
            <person name="Dai R."/>
            <person name="Chen F."/>
            <person name="Li S."/>
            <person name="Ye C."/>
            <person name="Du Z."/>
            <person name="Lin W."/>
            <person name="Wang J."/>
            <person name="Yu J."/>
            <person name="Yang H."/>
            <person name="Wang J."/>
            <person name="Huang P."/>
            <person name="Yang R."/>
        </authorList>
    </citation>
    <scope>NUCLEOTIDE SEQUENCE [LARGE SCALE GENOMIC DNA]</scope>
    <source>
        <strain>91001 / Biovar Mediaevalis</strain>
    </source>
</reference>
<organism>
    <name type="scientific">Yersinia pestis</name>
    <dbReference type="NCBI Taxonomy" id="632"/>
    <lineage>
        <taxon>Bacteria</taxon>
        <taxon>Pseudomonadati</taxon>
        <taxon>Pseudomonadota</taxon>
        <taxon>Gammaproteobacteria</taxon>
        <taxon>Enterobacterales</taxon>
        <taxon>Yersiniaceae</taxon>
        <taxon>Yersinia</taxon>
    </lineage>
</organism>
<protein>
    <recommendedName>
        <fullName evidence="1">Thiosulfate sulfurtransferase GlpE</fullName>
        <ecNumber evidence="1">2.8.1.1</ecNumber>
    </recommendedName>
</protein>
<name>GLPE_YERPE</name>
<gene>
    <name evidence="1" type="primary">glpE</name>
    <name type="ordered locus">YPO0122</name>
    <name type="ordered locus">y3899</name>
    <name type="ordered locus">YP_0124</name>
</gene>
<dbReference type="EC" id="2.8.1.1" evidence="1"/>
<dbReference type="EMBL" id="AL590842">
    <property type="protein sequence ID" value="CAL18809.1"/>
    <property type="status" value="ALT_INIT"/>
    <property type="molecule type" value="Genomic_DNA"/>
</dbReference>
<dbReference type="EMBL" id="AE009952">
    <property type="protein sequence ID" value="AAM87444.1"/>
    <property type="status" value="ALT_INIT"/>
    <property type="molecule type" value="Genomic_DNA"/>
</dbReference>
<dbReference type="EMBL" id="AE017042">
    <property type="protein sequence ID" value="AAS60403.1"/>
    <property type="status" value="ALT_INIT"/>
    <property type="molecule type" value="Genomic_DNA"/>
</dbReference>
<dbReference type="PIR" id="AH0015">
    <property type="entry name" value="AH0015"/>
</dbReference>
<dbReference type="RefSeq" id="WP_002208928.1">
    <property type="nucleotide sequence ID" value="NZ_WHKM01000009.1"/>
</dbReference>
<dbReference type="SMR" id="Q8ZJI3"/>
<dbReference type="STRING" id="214092.YPO0122"/>
<dbReference type="PaxDb" id="214092-YPO0122"/>
<dbReference type="EnsemblBacteria" id="AAS60403">
    <property type="protein sequence ID" value="AAS60403"/>
    <property type="gene ID" value="YP_0124"/>
</dbReference>
<dbReference type="GeneID" id="57974476"/>
<dbReference type="KEGG" id="ype:YPO0122"/>
<dbReference type="KEGG" id="ypk:y3899"/>
<dbReference type="KEGG" id="ypm:YP_0124"/>
<dbReference type="PATRIC" id="fig|632.151.peg.840"/>
<dbReference type="eggNOG" id="COG0607">
    <property type="taxonomic scope" value="Bacteria"/>
</dbReference>
<dbReference type="HOGENOM" id="CLU_089574_14_0_6"/>
<dbReference type="OrthoDB" id="9811849at2"/>
<dbReference type="Proteomes" id="UP000000815">
    <property type="component" value="Chromosome"/>
</dbReference>
<dbReference type="Proteomes" id="UP000001019">
    <property type="component" value="Chromosome"/>
</dbReference>
<dbReference type="Proteomes" id="UP000002490">
    <property type="component" value="Chromosome"/>
</dbReference>
<dbReference type="GO" id="GO:0005737">
    <property type="term" value="C:cytoplasm"/>
    <property type="evidence" value="ECO:0007669"/>
    <property type="project" value="UniProtKB-SubCell"/>
</dbReference>
<dbReference type="GO" id="GO:0004792">
    <property type="term" value="F:thiosulfate-cyanide sulfurtransferase activity"/>
    <property type="evidence" value="ECO:0007669"/>
    <property type="project" value="UniProtKB-UniRule"/>
</dbReference>
<dbReference type="GO" id="GO:0006071">
    <property type="term" value="P:glycerol metabolic process"/>
    <property type="evidence" value="ECO:0007669"/>
    <property type="project" value="UniProtKB-UniRule"/>
</dbReference>
<dbReference type="CDD" id="cd01444">
    <property type="entry name" value="GlpE_ST"/>
    <property type="match status" value="1"/>
</dbReference>
<dbReference type="Gene3D" id="3.40.250.10">
    <property type="entry name" value="Rhodanese-like domain"/>
    <property type="match status" value="1"/>
</dbReference>
<dbReference type="HAMAP" id="MF_01009">
    <property type="entry name" value="Thiosulf_sulfurtr"/>
    <property type="match status" value="1"/>
</dbReference>
<dbReference type="InterPro" id="IPR050229">
    <property type="entry name" value="GlpE_sulfurtransferase"/>
</dbReference>
<dbReference type="InterPro" id="IPR001763">
    <property type="entry name" value="Rhodanese-like_dom"/>
</dbReference>
<dbReference type="InterPro" id="IPR036873">
    <property type="entry name" value="Rhodanese-like_dom_sf"/>
</dbReference>
<dbReference type="InterPro" id="IPR023695">
    <property type="entry name" value="Thiosulf_sulfurTrfase"/>
</dbReference>
<dbReference type="NCBIfam" id="NF001195">
    <property type="entry name" value="PRK00162.1"/>
    <property type="match status" value="1"/>
</dbReference>
<dbReference type="PANTHER" id="PTHR43031">
    <property type="entry name" value="FAD-DEPENDENT OXIDOREDUCTASE"/>
    <property type="match status" value="1"/>
</dbReference>
<dbReference type="PANTHER" id="PTHR43031:SF6">
    <property type="entry name" value="THIOSULFATE SULFURTRANSFERASE GLPE"/>
    <property type="match status" value="1"/>
</dbReference>
<dbReference type="Pfam" id="PF00581">
    <property type="entry name" value="Rhodanese"/>
    <property type="match status" value="1"/>
</dbReference>
<dbReference type="SMART" id="SM00450">
    <property type="entry name" value="RHOD"/>
    <property type="match status" value="1"/>
</dbReference>
<dbReference type="SUPFAM" id="SSF52821">
    <property type="entry name" value="Rhodanese/Cell cycle control phosphatase"/>
    <property type="match status" value="1"/>
</dbReference>
<dbReference type="PROSITE" id="PS50206">
    <property type="entry name" value="RHODANESE_3"/>
    <property type="match status" value="1"/>
</dbReference>
<evidence type="ECO:0000255" key="1">
    <source>
        <dbReference type="HAMAP-Rule" id="MF_01009"/>
    </source>
</evidence>
<evidence type="ECO:0000305" key="2"/>
<comment type="function">
    <text evidence="1">Transferase that catalyzes the transfer of sulfur from thiosulfate to thiophilic acceptors such as cyanide or dithiols. May function in a CysM-independent thiosulfate assimilation pathway by catalyzing the conversion of thiosulfate to sulfite, which can then be used for L-cysteine biosynthesis.</text>
</comment>
<comment type="catalytic activity">
    <reaction evidence="1">
        <text>thiosulfate + hydrogen cyanide = thiocyanate + sulfite + 2 H(+)</text>
        <dbReference type="Rhea" id="RHEA:16881"/>
        <dbReference type="ChEBI" id="CHEBI:15378"/>
        <dbReference type="ChEBI" id="CHEBI:17359"/>
        <dbReference type="ChEBI" id="CHEBI:18022"/>
        <dbReference type="ChEBI" id="CHEBI:18407"/>
        <dbReference type="ChEBI" id="CHEBI:33542"/>
        <dbReference type="EC" id="2.8.1.1"/>
    </reaction>
</comment>
<comment type="catalytic activity">
    <reaction evidence="1">
        <text>thiosulfate + [thioredoxin]-dithiol = [thioredoxin]-disulfide + hydrogen sulfide + sulfite + 2 H(+)</text>
        <dbReference type="Rhea" id="RHEA:83859"/>
        <dbReference type="Rhea" id="RHEA-COMP:10698"/>
        <dbReference type="Rhea" id="RHEA-COMP:10700"/>
        <dbReference type="ChEBI" id="CHEBI:15378"/>
        <dbReference type="ChEBI" id="CHEBI:17359"/>
        <dbReference type="ChEBI" id="CHEBI:29919"/>
        <dbReference type="ChEBI" id="CHEBI:29950"/>
        <dbReference type="ChEBI" id="CHEBI:33542"/>
        <dbReference type="ChEBI" id="CHEBI:50058"/>
    </reaction>
</comment>
<comment type="subcellular location">
    <subcellularLocation>
        <location evidence="1">Cytoplasm</location>
    </subcellularLocation>
</comment>
<comment type="similarity">
    <text evidence="1">Belongs to the GlpE family.</text>
</comment>
<comment type="sequence caution" evidence="2">
    <conflict type="erroneous initiation">
        <sequence resource="EMBL-CDS" id="AAM87444"/>
    </conflict>
</comment>
<comment type="sequence caution" evidence="2">
    <conflict type="erroneous initiation">
        <sequence resource="EMBL-CDS" id="AAS60403"/>
    </conflict>
</comment>
<comment type="sequence caution" evidence="2">
    <conflict type="erroneous initiation">
        <sequence resource="EMBL-CDS" id="CAL18809"/>
    </conflict>
</comment>
<accession>Q8ZJI3</accession>
<accession>Q0WKH8</accession>
<proteinExistence type="inferred from homology"/>